<organism>
    <name type="scientific">Human papillomavirus 56</name>
    <dbReference type="NCBI Taxonomy" id="10596"/>
    <lineage>
        <taxon>Viruses</taxon>
        <taxon>Monodnaviria</taxon>
        <taxon>Shotokuvirae</taxon>
        <taxon>Cossaviricota</taxon>
        <taxon>Papovaviricetes</taxon>
        <taxon>Zurhausenvirales</taxon>
        <taxon>Papillomaviridae</taxon>
        <taxon>Firstpapillomavirinae</taxon>
        <taxon>Alphapapillomavirus</taxon>
        <taxon>Alphapapillomavirus 6</taxon>
    </lineage>
</organism>
<name>VE7_HPV56</name>
<comment type="function">
    <text evidence="1">Plays a role in viral genome replication by driving entry of quiescent cells into the cell cycle. Stimulation of progression from G1 to S phase allows the virus to efficiently use the cellular DNA replicating machinery to achieve viral genome replication. E7 protein has both transforming and trans-activating activities. Induces the disassembly of the E2F1 transcription factor from RB1, with subsequent transcriptional activation of E2F1-regulated S-phase genes. Interferes with host histone deacetylation mediated by HDAC1 and HDAC2, leading to transcription activation. Also plays a role in the inhibition of both antiviral and antiproliferative functions of host interferon alpha. Interaction with host TMEM173/STING impairs the ability of TMEM173/STING to sense cytosolic DNA and promote the production of type I interferon (IFN-alpha and IFN-beta).</text>
</comment>
<comment type="subunit">
    <text evidence="1">Homodimer. Homooligomer. Interacts with host RB1; this interaction induces dissociation of RB1-E2F1 complex thereby disrupting RB1 activity. Interacts with host EP300; this interaction represses EP300 transcriptional activity. Interacts with protein E2; this interaction inhibits E7 oncogenic activity. Interacts with host TMEM173/STING; this interaction impairs the ability of TMEM173/STING to sense cytosolic DNA and promote the production of type I interferon (IFN-alpha and IFN-beta).</text>
</comment>
<comment type="subcellular location">
    <subcellularLocation>
        <location evidence="1">Host cytoplasm</location>
    </subcellularLocation>
    <subcellularLocation>
        <location evidence="1">Host nucleus</location>
    </subcellularLocation>
    <text evidence="1">Predominantly found in the host nucleus.</text>
</comment>
<comment type="domain">
    <text evidence="1">The E7 terminal domain is an intrinsically disordered domain, whose flexibility and conformational transitions confer target adaptability to the oncoprotein. It allows adaptation to a variety of protein targets and exposes the PEST degradation sequence that regulates its turnover in the cell.</text>
</comment>
<comment type="PTM">
    <text evidence="1">Highly phosphorylated.</text>
</comment>
<comment type="similarity">
    <text evidence="1">Belongs to the papillomaviridae E7 protein family.</text>
</comment>
<accession>P36833</accession>
<feature type="chain" id="PRO_0000133452" description="Protein E7">
    <location>
        <begin position="1"/>
        <end position="105"/>
    </location>
</feature>
<feature type="zinc finger region" evidence="1">
    <location>
        <begin position="65"/>
        <end position="101"/>
    </location>
</feature>
<feature type="region of interest" description="E7 terminal domain" evidence="1">
    <location>
        <begin position="1"/>
        <end position="45"/>
    </location>
</feature>
<feature type="region of interest" description="Disordered" evidence="2">
    <location>
        <begin position="29"/>
        <end position="48"/>
    </location>
</feature>
<feature type="short sequence motif" description="LXCXE motif; interaction with host RB1 and TMEM173/STING" evidence="1">
    <location>
        <begin position="23"/>
        <end position="27"/>
    </location>
</feature>
<feature type="short sequence motif" description="Nuclear export signal" evidence="1">
    <location>
        <begin position="83"/>
        <end position="91"/>
    </location>
</feature>
<feature type="compositionally biased region" description="Acidic residues" evidence="2">
    <location>
        <begin position="30"/>
        <end position="40"/>
    </location>
</feature>
<organismHost>
    <name type="scientific">Homo sapiens</name>
    <name type="common">Human</name>
    <dbReference type="NCBI Taxonomy" id="9606"/>
</organismHost>
<evidence type="ECO:0000255" key="1">
    <source>
        <dbReference type="HAMAP-Rule" id="MF_04004"/>
    </source>
</evidence>
<evidence type="ECO:0000256" key="2">
    <source>
        <dbReference type="SAM" id="MobiDB-lite"/>
    </source>
</evidence>
<keyword id="KW-0010">Activator</keyword>
<keyword id="KW-0238">DNA-binding</keyword>
<keyword id="KW-0244">Early protein</keyword>
<keyword id="KW-1078">G1/S host cell cycle checkpoint dysregulation by virus</keyword>
<keyword id="KW-1035">Host cytoplasm</keyword>
<keyword id="KW-1048">Host nucleus</keyword>
<keyword id="KW-0945">Host-virus interaction</keyword>
<keyword id="KW-1090">Inhibition of host innate immune response by virus</keyword>
<keyword id="KW-1114">Inhibition of host interferon signaling pathway by virus</keyword>
<keyword id="KW-0922">Interferon antiviral system evasion</keyword>
<keyword id="KW-0479">Metal-binding</keyword>
<keyword id="KW-1121">Modulation of host cell cycle by virus</keyword>
<keyword id="KW-0553">Oncogene</keyword>
<keyword id="KW-1185">Reference proteome</keyword>
<keyword id="KW-0804">Transcription</keyword>
<keyword id="KW-0805">Transcription regulation</keyword>
<keyword id="KW-0899">Viral immunoevasion</keyword>
<keyword id="KW-0862">Zinc</keyword>
<keyword id="KW-0863">Zinc-finger</keyword>
<protein>
    <recommendedName>
        <fullName evidence="1">Protein E7</fullName>
    </recommendedName>
</protein>
<gene>
    <name evidence="1" type="primary">E7</name>
</gene>
<sequence>MHGKVPTLQDVVLELTPQTEIDLQCNEQLDSSEDEDEDEVDHLQERPQQARQAKQHTCYLIHVPCCECKFVVQLDIQSTKEDLRVVQQLLMGALTVTCPLCASSN</sequence>
<dbReference type="EMBL" id="X74483">
    <property type="protein sequence ID" value="CAA52597.1"/>
    <property type="molecule type" value="Genomic_DNA"/>
</dbReference>
<dbReference type="PIR" id="S36580">
    <property type="entry name" value="S36580"/>
</dbReference>
<dbReference type="SMR" id="P36833"/>
<dbReference type="Proteomes" id="UP000007666">
    <property type="component" value="Segment"/>
</dbReference>
<dbReference type="GO" id="GO:0030430">
    <property type="term" value="C:host cell cytoplasm"/>
    <property type="evidence" value="ECO:0007669"/>
    <property type="project" value="UniProtKB-SubCell"/>
</dbReference>
<dbReference type="GO" id="GO:0042025">
    <property type="term" value="C:host cell nucleus"/>
    <property type="evidence" value="ECO:0007669"/>
    <property type="project" value="UniProtKB-SubCell"/>
</dbReference>
<dbReference type="GO" id="GO:0003677">
    <property type="term" value="F:DNA binding"/>
    <property type="evidence" value="ECO:0007669"/>
    <property type="project" value="UniProtKB-UniRule"/>
</dbReference>
<dbReference type="GO" id="GO:0003700">
    <property type="term" value="F:DNA-binding transcription factor activity"/>
    <property type="evidence" value="ECO:0007669"/>
    <property type="project" value="UniProtKB-UniRule"/>
</dbReference>
<dbReference type="GO" id="GO:0019904">
    <property type="term" value="F:protein domain specific binding"/>
    <property type="evidence" value="ECO:0007669"/>
    <property type="project" value="UniProtKB-UniRule"/>
</dbReference>
<dbReference type="GO" id="GO:0008270">
    <property type="term" value="F:zinc ion binding"/>
    <property type="evidence" value="ECO:0007669"/>
    <property type="project" value="UniProtKB-KW"/>
</dbReference>
<dbReference type="GO" id="GO:0006351">
    <property type="term" value="P:DNA-templated transcription"/>
    <property type="evidence" value="ECO:0007669"/>
    <property type="project" value="UniProtKB-UniRule"/>
</dbReference>
<dbReference type="GO" id="GO:0039645">
    <property type="term" value="P:symbiont-mediated perturbation of host cell cycle G1/S transition checkpoint"/>
    <property type="evidence" value="ECO:0007669"/>
    <property type="project" value="UniProtKB-UniRule"/>
</dbReference>
<dbReference type="GO" id="GO:0052170">
    <property type="term" value="P:symbiont-mediated suppression of host innate immune response"/>
    <property type="evidence" value="ECO:0007669"/>
    <property type="project" value="UniProtKB-KW"/>
</dbReference>
<dbReference type="GO" id="GO:0039502">
    <property type="term" value="P:symbiont-mediated suppression of host type I interferon-mediated signaling pathway"/>
    <property type="evidence" value="ECO:0007669"/>
    <property type="project" value="UniProtKB-UniRule"/>
</dbReference>
<dbReference type="Gene3D" id="3.30.160.330">
    <property type="match status" value="1"/>
</dbReference>
<dbReference type="HAMAP" id="MF_04004">
    <property type="entry name" value="PPV_E7"/>
    <property type="match status" value="1"/>
</dbReference>
<dbReference type="InterPro" id="IPR000148">
    <property type="entry name" value="Papilloma_E7"/>
</dbReference>
<dbReference type="Pfam" id="PF00527">
    <property type="entry name" value="E7"/>
    <property type="match status" value="1"/>
</dbReference>
<dbReference type="PIRSF" id="PIRSF003407">
    <property type="entry name" value="Papvi_E7"/>
    <property type="match status" value="1"/>
</dbReference>
<dbReference type="SUPFAM" id="SSF161234">
    <property type="entry name" value="E7 C-terminal domain-like"/>
    <property type="match status" value="1"/>
</dbReference>
<reference key="1">
    <citation type="journal article" date="1994" name="Curr. Top. Microbiol. Immunol.">
        <title>Primer-directed sequencing of human papillomavirus types.</title>
        <authorList>
            <person name="Delius H."/>
            <person name="Hofmann B."/>
        </authorList>
    </citation>
    <scope>NUCLEOTIDE SEQUENCE [GENOMIC DNA]</scope>
</reference>
<reference key="2">
    <citation type="journal article" date="2002" name="Rev. Med. Virol.">
        <title>Interactions of SV40 large T antigen and other viral proteins with retinoblastoma tumour suppressor.</title>
        <authorList>
            <person name="Lee C."/>
            <person name="Cho Y."/>
        </authorList>
    </citation>
    <scope>REVIEW</scope>
</reference>
<proteinExistence type="inferred from homology"/>